<dbReference type="EC" id="3.6.1.26" evidence="1"/>
<dbReference type="EMBL" id="AL513382">
    <property type="protein sequence ID" value="CAD09560.1"/>
    <property type="molecule type" value="Genomic_DNA"/>
</dbReference>
<dbReference type="EMBL" id="AE014613">
    <property type="protein sequence ID" value="AAO71060.1"/>
    <property type="molecule type" value="Genomic_DNA"/>
</dbReference>
<dbReference type="RefSeq" id="NP_457987.1">
    <property type="nucleotide sequence ID" value="NC_003198.1"/>
</dbReference>
<dbReference type="RefSeq" id="WP_000750765.1">
    <property type="nucleotide sequence ID" value="NZ_WSUR01000010.1"/>
</dbReference>
<dbReference type="SMR" id="Q8Z2W6"/>
<dbReference type="STRING" id="220341.gene:17587671"/>
<dbReference type="KEGG" id="stt:t3555"/>
<dbReference type="KEGG" id="sty:STY3807"/>
<dbReference type="PATRIC" id="fig|220341.7.peg.3886"/>
<dbReference type="eggNOG" id="COG2134">
    <property type="taxonomic scope" value="Bacteria"/>
</dbReference>
<dbReference type="HOGENOM" id="CLU_077117_0_1_6"/>
<dbReference type="OMA" id="CLPNYEK"/>
<dbReference type="OrthoDB" id="481399at2"/>
<dbReference type="UniPathway" id="UPA00609">
    <property type="reaction ID" value="UER00664"/>
</dbReference>
<dbReference type="Proteomes" id="UP000000541">
    <property type="component" value="Chromosome"/>
</dbReference>
<dbReference type="Proteomes" id="UP000002670">
    <property type="component" value="Chromosome"/>
</dbReference>
<dbReference type="GO" id="GO:0005886">
    <property type="term" value="C:plasma membrane"/>
    <property type="evidence" value="ECO:0007669"/>
    <property type="project" value="UniProtKB-SubCell"/>
</dbReference>
<dbReference type="GO" id="GO:0008715">
    <property type="term" value="F:CDP-diacylglycerol diphosphatase activity"/>
    <property type="evidence" value="ECO:0007669"/>
    <property type="project" value="UniProtKB-UniRule"/>
</dbReference>
<dbReference type="GO" id="GO:0046342">
    <property type="term" value="P:CDP-diacylglycerol catabolic process"/>
    <property type="evidence" value="ECO:0007669"/>
    <property type="project" value="UniProtKB-UniRule"/>
</dbReference>
<dbReference type="GO" id="GO:0008654">
    <property type="term" value="P:phospholipid biosynthetic process"/>
    <property type="evidence" value="ECO:0007669"/>
    <property type="project" value="UniProtKB-KW"/>
</dbReference>
<dbReference type="Gene3D" id="3.30.428.30">
    <property type="entry name" value="HIT family - CDH-like"/>
    <property type="match status" value="1"/>
</dbReference>
<dbReference type="HAMAP" id="MF_00319">
    <property type="entry name" value="Cdh"/>
    <property type="match status" value="1"/>
</dbReference>
<dbReference type="InterPro" id="IPR003763">
    <property type="entry name" value="CDP-diacylglyc_Pase"/>
</dbReference>
<dbReference type="InterPro" id="IPR015993">
    <property type="entry name" value="CDP-diacylglyc_Pase_proteobac"/>
</dbReference>
<dbReference type="InterPro" id="IPR036265">
    <property type="entry name" value="HIT-like_sf"/>
</dbReference>
<dbReference type="NCBIfam" id="TIGR00672">
    <property type="entry name" value="cdh"/>
    <property type="match status" value="1"/>
</dbReference>
<dbReference type="NCBIfam" id="NF003986">
    <property type="entry name" value="PRK05471.1-5"/>
    <property type="match status" value="1"/>
</dbReference>
<dbReference type="NCBIfam" id="NF003987">
    <property type="entry name" value="PRK05471.1-6"/>
    <property type="match status" value="1"/>
</dbReference>
<dbReference type="Pfam" id="PF02611">
    <property type="entry name" value="CDH"/>
    <property type="match status" value="1"/>
</dbReference>
<dbReference type="PIRSF" id="PIRSF001273">
    <property type="entry name" value="CDH"/>
    <property type="match status" value="1"/>
</dbReference>
<dbReference type="SUPFAM" id="SSF54197">
    <property type="entry name" value="HIT-like"/>
    <property type="match status" value="1"/>
</dbReference>
<gene>
    <name evidence="1" type="primary">cdh</name>
    <name type="ordered locus">STY3807</name>
    <name type="ordered locus">t3555</name>
</gene>
<sequence>MKKTGYFLLAVIVIVAAAGVGYWKFSGNPDALREIVLERCLPDQLQHQNPAPCAEVKPRAGYVIFKDRHGPLQYLLMPTYRINGTESPLLLEPATPNFFWLAWQARGYMSKKYGHDIPDSAVSLAINSRLGRSQDHLHIHISCIRPDVREQLDNDLTRISTRWLPLPGDLMGHEYLARRVTESELAQRSPFMMLAEEVPEARDHMGRYALAVVRQSDDSFVLLATERNLLTLNRASAEEIQDHSCAILSSR</sequence>
<protein>
    <recommendedName>
        <fullName evidence="1">CDP-diacylglycerol pyrophosphatase</fullName>
        <ecNumber evidence="1">3.6.1.26</ecNumber>
    </recommendedName>
    <alternativeName>
        <fullName evidence="1">CDP-diacylglycerol phosphatidylhydrolase</fullName>
    </alternativeName>
    <alternativeName>
        <fullName evidence="1">CDP-diglyceride hydrolase</fullName>
    </alternativeName>
</protein>
<proteinExistence type="inferred from homology"/>
<feature type="chain" id="PRO_0000198582" description="CDP-diacylglycerol pyrophosphatase">
    <location>
        <begin position="1"/>
        <end position="251"/>
    </location>
</feature>
<feature type="transmembrane region" description="Helical" evidence="1">
    <location>
        <begin position="5"/>
        <end position="25"/>
    </location>
</feature>
<reference key="1">
    <citation type="journal article" date="2001" name="Nature">
        <title>Complete genome sequence of a multiple drug resistant Salmonella enterica serovar Typhi CT18.</title>
        <authorList>
            <person name="Parkhill J."/>
            <person name="Dougan G."/>
            <person name="James K.D."/>
            <person name="Thomson N.R."/>
            <person name="Pickard D."/>
            <person name="Wain J."/>
            <person name="Churcher C.M."/>
            <person name="Mungall K.L."/>
            <person name="Bentley S.D."/>
            <person name="Holden M.T.G."/>
            <person name="Sebaihia M."/>
            <person name="Baker S."/>
            <person name="Basham D."/>
            <person name="Brooks K."/>
            <person name="Chillingworth T."/>
            <person name="Connerton P."/>
            <person name="Cronin A."/>
            <person name="Davis P."/>
            <person name="Davies R.M."/>
            <person name="Dowd L."/>
            <person name="White N."/>
            <person name="Farrar J."/>
            <person name="Feltwell T."/>
            <person name="Hamlin N."/>
            <person name="Haque A."/>
            <person name="Hien T.T."/>
            <person name="Holroyd S."/>
            <person name="Jagels K."/>
            <person name="Krogh A."/>
            <person name="Larsen T.S."/>
            <person name="Leather S."/>
            <person name="Moule S."/>
            <person name="O'Gaora P."/>
            <person name="Parry C."/>
            <person name="Quail M.A."/>
            <person name="Rutherford K.M."/>
            <person name="Simmonds M."/>
            <person name="Skelton J."/>
            <person name="Stevens K."/>
            <person name="Whitehead S."/>
            <person name="Barrell B.G."/>
        </authorList>
    </citation>
    <scope>NUCLEOTIDE SEQUENCE [LARGE SCALE GENOMIC DNA]</scope>
    <source>
        <strain>CT18</strain>
    </source>
</reference>
<reference key="2">
    <citation type="journal article" date="2003" name="J. Bacteriol.">
        <title>Comparative genomics of Salmonella enterica serovar Typhi strains Ty2 and CT18.</title>
        <authorList>
            <person name="Deng W."/>
            <person name="Liou S.-R."/>
            <person name="Plunkett G. III"/>
            <person name="Mayhew G.F."/>
            <person name="Rose D.J."/>
            <person name="Burland V."/>
            <person name="Kodoyianni V."/>
            <person name="Schwartz D.C."/>
            <person name="Blattner F.R."/>
        </authorList>
    </citation>
    <scope>NUCLEOTIDE SEQUENCE [LARGE SCALE GENOMIC DNA]</scope>
    <source>
        <strain>ATCC 700931 / Ty2</strain>
    </source>
</reference>
<evidence type="ECO:0000255" key="1">
    <source>
        <dbReference type="HAMAP-Rule" id="MF_00319"/>
    </source>
</evidence>
<comment type="catalytic activity">
    <reaction evidence="1">
        <text>a CDP-1,2-diacyl-sn-glycerol + H2O = a 1,2-diacyl-sn-glycero-3-phosphate + CMP + 2 H(+)</text>
        <dbReference type="Rhea" id="RHEA:15221"/>
        <dbReference type="ChEBI" id="CHEBI:15377"/>
        <dbReference type="ChEBI" id="CHEBI:15378"/>
        <dbReference type="ChEBI" id="CHEBI:58332"/>
        <dbReference type="ChEBI" id="CHEBI:58608"/>
        <dbReference type="ChEBI" id="CHEBI:60377"/>
        <dbReference type="EC" id="3.6.1.26"/>
    </reaction>
</comment>
<comment type="pathway">
    <text evidence="1">Phospholipid metabolism; CDP-diacylglycerol degradation; phosphatidate from CDP-diacylglycerol: step 1/1.</text>
</comment>
<comment type="subcellular location">
    <subcellularLocation>
        <location evidence="1">Cell inner membrane</location>
        <topology evidence="1">Single-pass membrane protein</topology>
    </subcellularLocation>
</comment>
<comment type="similarity">
    <text evidence="1">Belongs to the Cdh family.</text>
</comment>
<keyword id="KW-0997">Cell inner membrane</keyword>
<keyword id="KW-1003">Cell membrane</keyword>
<keyword id="KW-0378">Hydrolase</keyword>
<keyword id="KW-0444">Lipid biosynthesis</keyword>
<keyword id="KW-0443">Lipid metabolism</keyword>
<keyword id="KW-0472">Membrane</keyword>
<keyword id="KW-0594">Phospholipid biosynthesis</keyword>
<keyword id="KW-1208">Phospholipid metabolism</keyword>
<keyword id="KW-0812">Transmembrane</keyword>
<keyword id="KW-1133">Transmembrane helix</keyword>
<name>CDH_SALTI</name>
<accession>Q8Z2W6</accession>
<organism>
    <name type="scientific">Salmonella typhi</name>
    <dbReference type="NCBI Taxonomy" id="90370"/>
    <lineage>
        <taxon>Bacteria</taxon>
        <taxon>Pseudomonadati</taxon>
        <taxon>Pseudomonadota</taxon>
        <taxon>Gammaproteobacteria</taxon>
        <taxon>Enterobacterales</taxon>
        <taxon>Enterobacteriaceae</taxon>
        <taxon>Salmonella</taxon>
    </lineage>
</organism>